<feature type="chain" id="PRO_0000358019" description="NAD(P)H-quinone oxidoreductase subunit H, chloroplastic">
    <location>
        <begin position="1"/>
        <end position="393"/>
    </location>
</feature>
<proteinExistence type="inferred from homology"/>
<geneLocation type="chloroplast"/>
<reference key="1">
    <citation type="journal article" date="2007" name="BMC Genomics">
        <title>Rapid evolutionary change of common bean (Phaseolus vulgaris L) plastome, and the genomic diversification of legume chloroplasts.</title>
        <authorList>
            <person name="Guo X."/>
            <person name="Castillo-Ramirez S."/>
            <person name="Gonzalez V."/>
            <person name="Bustos P."/>
            <person name="Fernandez-Vazquez J.L."/>
            <person name="Santamaria R.I."/>
            <person name="Arellano J."/>
            <person name="Cevallos M.A."/>
            <person name="Davila G."/>
        </authorList>
    </citation>
    <scope>NUCLEOTIDE SEQUENCE [LARGE SCALE GENOMIC DNA]</scope>
    <source>
        <strain>cv. Negro Jamapa</strain>
    </source>
</reference>
<reference key="2">
    <citation type="submission" date="2007-10" db="EMBL/GenBank/DDBJ databases">
        <title>Complete nucleotide sequence of the plastid genome of the common bean, Phaseolus vulgaris.</title>
        <authorList>
            <person name="Moore M.J."/>
            <person name="Triplett E.W."/>
            <person name="Broughton W.J."/>
            <person name="Soltis P.S."/>
            <person name="Soltis D.E."/>
        </authorList>
    </citation>
    <scope>NUCLEOTIDE SEQUENCE [LARGE SCALE GENOMIC DNA]</scope>
</reference>
<keyword id="KW-0150">Chloroplast</keyword>
<keyword id="KW-0472">Membrane</keyword>
<keyword id="KW-0520">NAD</keyword>
<keyword id="KW-0521">NADP</keyword>
<keyword id="KW-0934">Plastid</keyword>
<keyword id="KW-0618">Plastoquinone</keyword>
<keyword id="KW-0874">Quinone</keyword>
<keyword id="KW-0793">Thylakoid</keyword>
<keyword id="KW-1278">Translocase</keyword>
<keyword id="KW-0813">Transport</keyword>
<dbReference type="EC" id="7.1.1.-" evidence="1"/>
<dbReference type="EMBL" id="DQ886273">
    <property type="protein sequence ID" value="ABH88134.1"/>
    <property type="molecule type" value="Genomic_DNA"/>
</dbReference>
<dbReference type="EMBL" id="EU196765">
    <property type="protein sequence ID" value="ABW22812.1"/>
    <property type="molecule type" value="Genomic_DNA"/>
</dbReference>
<dbReference type="RefSeq" id="YP_001122853.1">
    <property type="nucleotide sequence ID" value="NC_009259.1"/>
</dbReference>
<dbReference type="SMR" id="A4GGF2"/>
<dbReference type="GeneID" id="4961784"/>
<dbReference type="KEGG" id="pvu:4961784"/>
<dbReference type="eggNOG" id="KOG2870">
    <property type="taxonomic scope" value="Eukaryota"/>
</dbReference>
<dbReference type="PhylomeDB" id="A4GGF2"/>
<dbReference type="GO" id="GO:0009535">
    <property type="term" value="C:chloroplast thylakoid membrane"/>
    <property type="evidence" value="ECO:0007669"/>
    <property type="project" value="UniProtKB-SubCell"/>
</dbReference>
<dbReference type="GO" id="GO:0051287">
    <property type="term" value="F:NAD binding"/>
    <property type="evidence" value="ECO:0007669"/>
    <property type="project" value="InterPro"/>
</dbReference>
<dbReference type="GO" id="GO:0016655">
    <property type="term" value="F:oxidoreductase activity, acting on NAD(P)H, quinone or similar compound as acceptor"/>
    <property type="evidence" value="ECO:0007669"/>
    <property type="project" value="UniProtKB-UniRule"/>
</dbReference>
<dbReference type="GO" id="GO:0048038">
    <property type="term" value="F:quinone binding"/>
    <property type="evidence" value="ECO:0007669"/>
    <property type="project" value="UniProtKB-KW"/>
</dbReference>
<dbReference type="GO" id="GO:0019684">
    <property type="term" value="P:photosynthesis, light reaction"/>
    <property type="evidence" value="ECO:0007669"/>
    <property type="project" value="UniProtKB-UniRule"/>
</dbReference>
<dbReference type="Gene3D" id="1.10.645.10">
    <property type="entry name" value="Cytochrome-c3 Hydrogenase, chain B"/>
    <property type="match status" value="1"/>
</dbReference>
<dbReference type="HAMAP" id="MF_01358">
    <property type="entry name" value="NDH1_NuoD"/>
    <property type="match status" value="1"/>
</dbReference>
<dbReference type="InterPro" id="IPR001135">
    <property type="entry name" value="NADH_Q_OxRdtase_suD"/>
</dbReference>
<dbReference type="InterPro" id="IPR014029">
    <property type="entry name" value="NADH_UbQ_OxRdtase_49kDa_CS"/>
</dbReference>
<dbReference type="InterPro" id="IPR022885">
    <property type="entry name" value="NDH1_su_D/H"/>
</dbReference>
<dbReference type="InterPro" id="IPR029014">
    <property type="entry name" value="NiFe-Hase_large"/>
</dbReference>
<dbReference type="NCBIfam" id="NF004739">
    <property type="entry name" value="PRK06075.1"/>
    <property type="match status" value="1"/>
</dbReference>
<dbReference type="NCBIfam" id="NF005649">
    <property type="entry name" value="PRK07415.1"/>
    <property type="match status" value="1"/>
</dbReference>
<dbReference type="PANTHER" id="PTHR11993:SF10">
    <property type="entry name" value="NADH DEHYDROGENASE [UBIQUINONE] IRON-SULFUR PROTEIN 2, MITOCHONDRIAL"/>
    <property type="match status" value="1"/>
</dbReference>
<dbReference type="PANTHER" id="PTHR11993">
    <property type="entry name" value="NADH-UBIQUINONE OXIDOREDUCTASE 49 KDA SUBUNIT"/>
    <property type="match status" value="1"/>
</dbReference>
<dbReference type="Pfam" id="PF00346">
    <property type="entry name" value="Complex1_49kDa"/>
    <property type="match status" value="1"/>
</dbReference>
<dbReference type="SUPFAM" id="SSF56762">
    <property type="entry name" value="HydB/Nqo4-like"/>
    <property type="match status" value="1"/>
</dbReference>
<dbReference type="PROSITE" id="PS00535">
    <property type="entry name" value="COMPLEX1_49K"/>
    <property type="match status" value="1"/>
</dbReference>
<sequence length="393" mass="45709">MNISTIRKDFMIVNMGPHHPSMHGVLRLIVTLDGEDVIDCEPILGYLHRGMEKIAENRTIIQYLPYVTRWDYLATMFTEAITVNGPEQLGNIQVPKRASYIRVIMLELSRIASHLLWLGPFMADIGAQTPFFYIFREREFIYDLFEAATGMRMMHNFFRIGGVATDLPYGWVDKCSDFCDYFLTSIAEYQKLITRNPIFLERVEGVGVVDVKEVINWGLSGPMLRASGIQWDLRKVDNYECYEEFHWEVQWQKEGDSLARYLVRIGEMVESIKIIQQALEGLPGGPYENLEIRCFDREKEPEWNEFEYRFISKKSSPSFELPKQELYVRIEAPKGELGIFIIGDQNGFPWRWKIHPPGFINLQILPQLVKRMKLADIMTILGSIDIIMGEVDR</sequence>
<protein>
    <recommendedName>
        <fullName evidence="1">NAD(P)H-quinone oxidoreductase subunit H, chloroplastic</fullName>
        <ecNumber evidence="1">7.1.1.-</ecNumber>
    </recommendedName>
    <alternativeName>
        <fullName>NAD(P)H dehydrogenase subunit H</fullName>
    </alternativeName>
    <alternativeName>
        <fullName evidence="1">NADH-plastoquinone oxidoreductase 49 kDa subunit</fullName>
    </alternativeName>
    <alternativeName>
        <fullName evidence="1">NADH-plastoquinone oxidoreductase subunit H</fullName>
    </alternativeName>
</protein>
<evidence type="ECO:0000255" key="1">
    <source>
        <dbReference type="HAMAP-Rule" id="MF_01358"/>
    </source>
</evidence>
<gene>
    <name evidence="1" type="primary">ndhH</name>
</gene>
<accession>A4GGF2</accession>
<organism>
    <name type="scientific">Phaseolus vulgaris</name>
    <name type="common">Kidney bean</name>
    <name type="synonym">French bean</name>
    <dbReference type="NCBI Taxonomy" id="3885"/>
    <lineage>
        <taxon>Eukaryota</taxon>
        <taxon>Viridiplantae</taxon>
        <taxon>Streptophyta</taxon>
        <taxon>Embryophyta</taxon>
        <taxon>Tracheophyta</taxon>
        <taxon>Spermatophyta</taxon>
        <taxon>Magnoliopsida</taxon>
        <taxon>eudicotyledons</taxon>
        <taxon>Gunneridae</taxon>
        <taxon>Pentapetalae</taxon>
        <taxon>rosids</taxon>
        <taxon>fabids</taxon>
        <taxon>Fabales</taxon>
        <taxon>Fabaceae</taxon>
        <taxon>Papilionoideae</taxon>
        <taxon>50 kb inversion clade</taxon>
        <taxon>NPAAA clade</taxon>
        <taxon>indigoferoid/millettioid clade</taxon>
        <taxon>Phaseoleae</taxon>
        <taxon>Phaseolus</taxon>
    </lineage>
</organism>
<name>NDHH_PHAVU</name>
<comment type="function">
    <text evidence="1">NDH shuttles electrons from NAD(P)H:plastoquinone, via FMN and iron-sulfur (Fe-S) centers, to quinones in the photosynthetic chain and possibly in a chloroplast respiratory chain. The immediate electron acceptor for the enzyme in this species is believed to be plastoquinone. Couples the redox reaction to proton translocation, and thus conserves the redox energy in a proton gradient.</text>
</comment>
<comment type="catalytic activity">
    <reaction evidence="1">
        <text>a plastoquinone + NADH + (n+1) H(+)(in) = a plastoquinol + NAD(+) + n H(+)(out)</text>
        <dbReference type="Rhea" id="RHEA:42608"/>
        <dbReference type="Rhea" id="RHEA-COMP:9561"/>
        <dbReference type="Rhea" id="RHEA-COMP:9562"/>
        <dbReference type="ChEBI" id="CHEBI:15378"/>
        <dbReference type="ChEBI" id="CHEBI:17757"/>
        <dbReference type="ChEBI" id="CHEBI:57540"/>
        <dbReference type="ChEBI" id="CHEBI:57945"/>
        <dbReference type="ChEBI" id="CHEBI:62192"/>
    </reaction>
</comment>
<comment type="catalytic activity">
    <reaction evidence="1">
        <text>a plastoquinone + NADPH + (n+1) H(+)(in) = a plastoquinol + NADP(+) + n H(+)(out)</text>
        <dbReference type="Rhea" id="RHEA:42612"/>
        <dbReference type="Rhea" id="RHEA-COMP:9561"/>
        <dbReference type="Rhea" id="RHEA-COMP:9562"/>
        <dbReference type="ChEBI" id="CHEBI:15378"/>
        <dbReference type="ChEBI" id="CHEBI:17757"/>
        <dbReference type="ChEBI" id="CHEBI:57783"/>
        <dbReference type="ChEBI" id="CHEBI:58349"/>
        <dbReference type="ChEBI" id="CHEBI:62192"/>
    </reaction>
</comment>
<comment type="subunit">
    <text evidence="1">NDH is composed of at least 16 different subunits, 5 of which are encoded in the nucleus.</text>
</comment>
<comment type="subcellular location">
    <subcellularLocation>
        <location evidence="1">Plastid</location>
        <location evidence="1">Chloroplast thylakoid membrane</location>
        <topology evidence="1">Peripheral membrane protein</topology>
        <orientation evidence="1">Stromal side</orientation>
    </subcellularLocation>
</comment>
<comment type="similarity">
    <text evidence="1">Belongs to the complex I 49 kDa subunit family.</text>
</comment>